<evidence type="ECO:0000250" key="1"/>
<evidence type="ECO:0000305" key="2"/>
<feature type="signal peptide" evidence="1">
    <location>
        <begin position="1"/>
        <end position="19"/>
    </location>
</feature>
<feature type="chain" id="PRO_0000025273" description="Major outer membrane protein P.IA">
    <location>
        <begin position="20"/>
        <end position="395"/>
    </location>
</feature>
<gene>
    <name type="primary">porA</name>
    <name type="ordered locus">NMA1642</name>
</gene>
<comment type="function">
    <text>Serves as a slightly cation selective porin. Major antigen on the gonococcal cell surface and it may have pathogenic properties in addition to its porin activity.</text>
</comment>
<comment type="subunit">
    <text>Homotrimer.</text>
</comment>
<comment type="subcellular location">
    <subcellularLocation>
        <location>Cell outer membrane</location>
        <topology>Multi-pass membrane protein</topology>
    </subcellularLocation>
</comment>
<comment type="similarity">
    <text evidence="2">Belongs to the Gram-negative porin family.</text>
</comment>
<reference key="1">
    <citation type="journal article" date="2000" name="Nature">
        <title>Complete DNA sequence of a serogroup A strain of Neisseria meningitidis Z2491.</title>
        <authorList>
            <person name="Parkhill J."/>
            <person name="Achtman M."/>
            <person name="James K.D."/>
            <person name="Bentley S.D."/>
            <person name="Churcher C.M."/>
            <person name="Klee S.R."/>
            <person name="Morelli G."/>
            <person name="Basham D."/>
            <person name="Brown D."/>
            <person name="Chillingworth T."/>
            <person name="Davies R.M."/>
            <person name="Davis P."/>
            <person name="Devlin K."/>
            <person name="Feltwell T."/>
            <person name="Hamlin N."/>
            <person name="Holroyd S."/>
            <person name="Jagels K."/>
            <person name="Leather S."/>
            <person name="Moule S."/>
            <person name="Mungall K.L."/>
            <person name="Quail M.A."/>
            <person name="Rajandream M.A."/>
            <person name="Rutherford K.M."/>
            <person name="Simmonds M."/>
            <person name="Skelton J."/>
            <person name="Whitehead S."/>
            <person name="Spratt B.G."/>
            <person name="Barrell B.G."/>
        </authorList>
    </citation>
    <scope>NUCLEOTIDE SEQUENCE [LARGE SCALE GENOMIC DNA]</scope>
    <source>
        <strain>DSM 15465 / Z2491</strain>
    </source>
</reference>
<organism>
    <name type="scientific">Neisseria meningitidis serogroup A / serotype 4A (strain DSM 15465 / Z2491)</name>
    <dbReference type="NCBI Taxonomy" id="122587"/>
    <lineage>
        <taxon>Bacteria</taxon>
        <taxon>Pseudomonadati</taxon>
        <taxon>Pseudomonadota</taxon>
        <taxon>Betaproteobacteria</taxon>
        <taxon>Neisseriales</taxon>
        <taxon>Neisseriaceae</taxon>
        <taxon>Neisseria</taxon>
    </lineage>
</organism>
<protein>
    <recommendedName>
        <fullName>Major outer membrane protein P.IA</fullName>
        <shortName>PIA</shortName>
        <shortName>Protein IA</shortName>
    </recommendedName>
    <alternativeName>
        <fullName>Class 1 protein</fullName>
    </alternativeName>
</protein>
<name>OMPA_NEIMA</name>
<dbReference type="EMBL" id="AL157959">
    <property type="protein sequence ID" value="CAM08777.1"/>
    <property type="molecule type" value="Genomic_DNA"/>
</dbReference>
<dbReference type="PIR" id="F81858">
    <property type="entry name" value="F81858"/>
</dbReference>
<dbReference type="RefSeq" id="WP_002247001.1">
    <property type="nucleotide sequence ID" value="NC_003116.1"/>
</dbReference>
<dbReference type="PDB" id="1QKZ">
    <property type="method" value="X-ray"/>
    <property type="resolution" value="1.95 A"/>
    <property type="chains" value="P=46-55"/>
</dbReference>
<dbReference type="PDBsum" id="1QKZ"/>
<dbReference type="SMR" id="P57041"/>
<dbReference type="ABCD" id="P57041">
    <property type="antibodies" value="2 sequenced antibodies"/>
</dbReference>
<dbReference type="EnsemblBacteria" id="CAM08777">
    <property type="protein sequence ID" value="CAM08777"/>
    <property type="gene ID" value="NMA1642"/>
</dbReference>
<dbReference type="KEGG" id="nma:NMA1642"/>
<dbReference type="HOGENOM" id="CLU_038238_4_0_4"/>
<dbReference type="EvolutionaryTrace" id="P57041"/>
<dbReference type="Proteomes" id="UP000000626">
    <property type="component" value="Chromosome"/>
</dbReference>
<dbReference type="GO" id="GO:0009279">
    <property type="term" value="C:cell outer membrane"/>
    <property type="evidence" value="ECO:0007669"/>
    <property type="project" value="UniProtKB-SubCell"/>
</dbReference>
<dbReference type="GO" id="GO:0046930">
    <property type="term" value="C:pore complex"/>
    <property type="evidence" value="ECO:0007669"/>
    <property type="project" value="UniProtKB-KW"/>
</dbReference>
<dbReference type="GO" id="GO:0015288">
    <property type="term" value="F:porin activity"/>
    <property type="evidence" value="ECO:0007669"/>
    <property type="project" value="UniProtKB-KW"/>
</dbReference>
<dbReference type="GO" id="GO:0034220">
    <property type="term" value="P:monoatomic ion transmembrane transport"/>
    <property type="evidence" value="ECO:0007669"/>
    <property type="project" value="InterPro"/>
</dbReference>
<dbReference type="CDD" id="cd00342">
    <property type="entry name" value="gram_neg_porins"/>
    <property type="match status" value="1"/>
</dbReference>
<dbReference type="Gene3D" id="2.40.160.10">
    <property type="entry name" value="Porin"/>
    <property type="match status" value="1"/>
</dbReference>
<dbReference type="InterPro" id="IPR050298">
    <property type="entry name" value="Gram-neg_bact_OMP"/>
</dbReference>
<dbReference type="InterPro" id="IPR033900">
    <property type="entry name" value="Gram_neg_porin_domain"/>
</dbReference>
<dbReference type="InterPro" id="IPR023614">
    <property type="entry name" value="Porin_dom_sf"/>
</dbReference>
<dbReference type="InterPro" id="IPR001702">
    <property type="entry name" value="Porin_Gram-ve"/>
</dbReference>
<dbReference type="InterPro" id="IPR013793">
    <property type="entry name" value="Porin_Gram-ve_CS"/>
</dbReference>
<dbReference type="InterPro" id="IPR002299">
    <property type="entry name" value="Porin_Neis"/>
</dbReference>
<dbReference type="PANTHER" id="PTHR34501:SF9">
    <property type="entry name" value="MAJOR OUTER MEMBRANE PROTEIN P.IA"/>
    <property type="match status" value="1"/>
</dbReference>
<dbReference type="PANTHER" id="PTHR34501">
    <property type="entry name" value="PROTEIN YDDL-RELATED"/>
    <property type="match status" value="1"/>
</dbReference>
<dbReference type="Pfam" id="PF00267">
    <property type="entry name" value="Porin_1"/>
    <property type="match status" value="1"/>
</dbReference>
<dbReference type="PRINTS" id="PR00182">
    <property type="entry name" value="ECOLNEIPORIN"/>
</dbReference>
<dbReference type="PRINTS" id="PR00184">
    <property type="entry name" value="NEISSPPORIN"/>
</dbReference>
<dbReference type="SUPFAM" id="SSF56935">
    <property type="entry name" value="Porins"/>
    <property type="match status" value="1"/>
</dbReference>
<dbReference type="PROSITE" id="PS00576">
    <property type="entry name" value="GRAM_NEG_PORIN"/>
    <property type="match status" value="1"/>
</dbReference>
<proteinExistence type="evidence at protein level"/>
<keyword id="KW-0002">3D-structure</keyword>
<keyword id="KW-0998">Cell outer membrane</keyword>
<keyword id="KW-0406">Ion transport</keyword>
<keyword id="KW-0472">Membrane</keyword>
<keyword id="KW-0626">Porin</keyword>
<keyword id="KW-0732">Signal</keyword>
<keyword id="KW-0812">Transmembrane</keyword>
<keyword id="KW-1134">Transmembrane beta strand</keyword>
<keyword id="KW-0813">Transport</keyword>
<sequence length="395" mass="42270">MRKKLTALVLSALPLAAVADVSLYGEIKAGVEGRNYQLQLTEAQAANGGASGQVKVTKVTKAKSRIRTKISDFGSFIGFKGSEDLGEGLKAVWQLEQDVSVAGGGATQWGNRESFIGLAGEFGTLRAGRVANQFDDASQAIDPWDSNNDVASQLGIFKRHDDMPVSVRYDSPEFSGFSGSVQFVPAQNSKSAYKPAYWTTVNTGSATTTTFVPAVVGKPGSDVYYAGLNYKNGGFAGNYAFKYARHANVGRDAFELFLLGSGSDQAKGTDPLKNHQVHRLTGGYEEGGLNLALAAQLDLSENGDKTKNSTTEIAATASYRFGNAVPRISYAHGFDFIERGKKGENTSYDQIIAGVDYDFSKRTSAIVSGAWLKRNTGIGNYTQINAASVGLRHKF</sequence>
<accession>P57041</accession>
<accession>A1ISL8</accession>